<protein>
    <recommendedName>
        <fullName evidence="4">Chloroacetanilide N-alkylformylase 2, ferredoxin component</fullName>
    </recommendedName>
    <alternativeName>
        <fullName evidence="6">Ferredoxin CndB2</fullName>
    </alternativeName>
</protein>
<keyword id="KW-0001">2Fe-2S</keyword>
<keyword id="KW-0249">Electron transport</keyword>
<keyword id="KW-0408">Iron</keyword>
<keyword id="KW-0411">Iron-sulfur</keyword>
<keyword id="KW-0479">Metal-binding</keyword>
<keyword id="KW-0813">Transport</keyword>
<organism>
    <name type="scientific">Rhizorhabdus wittichii (strain DC-6 / KACC 16600)</name>
    <name type="common">Sphingomonas wittichii</name>
    <dbReference type="NCBI Taxonomy" id="1283312"/>
    <lineage>
        <taxon>Bacteria</taxon>
        <taxon>Pseudomonadati</taxon>
        <taxon>Pseudomonadota</taxon>
        <taxon>Alphaproteobacteria</taxon>
        <taxon>Sphingomonadales</taxon>
        <taxon>Sphingomonadaceae</taxon>
        <taxon>Rhizorhabdus</taxon>
    </lineage>
</organism>
<reference key="1">
    <citation type="journal article" date="2014" name="Appl. Environ. Microbiol.">
        <title>Novel three-component Rieske non-heme iron oxygenase system catalyzing the N-dealkylation of chloroacetanilide herbicides in sphingomonads DC-6 and DC-2.</title>
        <authorList>
            <person name="Chen Q."/>
            <person name="Wang C.H."/>
            <person name="Deng S.K."/>
            <person name="Wu Y.D."/>
            <person name="Li Y."/>
            <person name="Yao L."/>
            <person name="Jiang J.D."/>
            <person name="Yan X."/>
            <person name="He J."/>
            <person name="Li S.P."/>
        </authorList>
    </citation>
    <scope>NUCLEOTIDE SEQUENCE [LARGE SCALE GENOMIC DNA]</scope>
    <scope>FUNCTION</scope>
    <scope>SUBUNIT</scope>
    <source>
        <strain>DC-6 / KACC 16600</strain>
    </source>
</reference>
<reference key="2">
    <citation type="submission" date="2017-05" db="EMBL/GenBank/DDBJ databases">
        <title>Comparative genome analysis reveals the molecular basis of chloroacetanilide herbicide mineralization in Sphingomonas wittichii DC-6.</title>
        <authorList>
            <person name="Cheng M."/>
            <person name="Chen Q."/>
            <person name="Qiu J."/>
            <person name="Yan X."/>
            <person name="He J."/>
        </authorList>
    </citation>
    <scope>NUCLEOTIDE SEQUENCE [GENOMIC DNA]</scope>
    <source>
        <strain>DC-6 / KACC 16600</strain>
    </source>
</reference>
<name>CNDB2_RHIWD</name>
<accession>X5CWH9</accession>
<evidence type="ECO:0000250" key="1">
    <source>
        <dbReference type="UniProtKB" id="P80306"/>
    </source>
</evidence>
<evidence type="ECO:0000255" key="2">
    <source>
        <dbReference type="PROSITE-ProRule" id="PRU00465"/>
    </source>
</evidence>
<evidence type="ECO:0000269" key="3">
    <source>
    </source>
</evidence>
<evidence type="ECO:0000303" key="4">
    <source>
    </source>
</evidence>
<evidence type="ECO:0000305" key="5"/>
<evidence type="ECO:0000305" key="6">
    <source>
    </source>
</evidence>
<evidence type="ECO:0000312" key="7">
    <source>
        <dbReference type="EMBL" id="ARR54349.1"/>
    </source>
</evidence>
<sequence>MPKLVVVTREGEESVIEAETGLSVMEVIRDAGIDELLALCGGCCSCATCHVFVDPAFNGLLPDMSDDENDLLDSSDHRDDRSRLSCQLTMTDELDGLTVTIAPED</sequence>
<feature type="chain" id="PRO_0000445253" description="Chloroacetanilide N-alkylformylase 2, ferredoxin component">
    <location>
        <begin position="1"/>
        <end position="105"/>
    </location>
</feature>
<feature type="domain" description="2Fe-2S ferredoxin-type" evidence="2">
    <location>
        <begin position="2"/>
        <end position="105"/>
    </location>
</feature>
<feature type="binding site" evidence="1">
    <location>
        <position position="40"/>
    </location>
    <ligand>
        <name>[2Fe-2S] cluster</name>
        <dbReference type="ChEBI" id="CHEBI:190135"/>
    </ligand>
</feature>
<feature type="binding site" evidence="1">
    <location>
        <position position="46"/>
    </location>
    <ligand>
        <name>[2Fe-2S] cluster</name>
        <dbReference type="ChEBI" id="CHEBI:190135"/>
    </ligand>
</feature>
<feature type="binding site" evidence="1">
    <location>
        <position position="49"/>
    </location>
    <ligand>
        <name>[2Fe-2S] cluster</name>
        <dbReference type="ChEBI" id="CHEBI:190135"/>
    </ligand>
</feature>
<feature type="binding site" evidence="1">
    <location>
        <position position="86"/>
    </location>
    <ligand>
        <name>[2Fe-2S] cluster</name>
        <dbReference type="ChEBI" id="CHEBI:190135"/>
    </ligand>
</feature>
<proteinExistence type="evidence at protein level"/>
<dbReference type="EMBL" id="KJ020543">
    <property type="protein sequence ID" value="AHW42449.1"/>
    <property type="molecule type" value="Genomic_DNA"/>
</dbReference>
<dbReference type="EMBL" id="CP021181">
    <property type="protein sequence ID" value="ARR54349.1"/>
    <property type="molecule type" value="Genomic_DNA"/>
</dbReference>
<dbReference type="SMR" id="X5CWH9"/>
<dbReference type="KEGG" id="sphd:HY78_13385"/>
<dbReference type="GO" id="GO:0051537">
    <property type="term" value="F:2 iron, 2 sulfur cluster binding"/>
    <property type="evidence" value="ECO:0007669"/>
    <property type="project" value="UniProtKB-KW"/>
</dbReference>
<dbReference type="GO" id="GO:0009055">
    <property type="term" value="F:electron transfer activity"/>
    <property type="evidence" value="ECO:0007669"/>
    <property type="project" value="TreeGrafter"/>
</dbReference>
<dbReference type="GO" id="GO:0046872">
    <property type="term" value="F:metal ion binding"/>
    <property type="evidence" value="ECO:0007669"/>
    <property type="project" value="UniProtKB-KW"/>
</dbReference>
<dbReference type="GO" id="GO:0140647">
    <property type="term" value="P:P450-containing electron transport chain"/>
    <property type="evidence" value="ECO:0007669"/>
    <property type="project" value="InterPro"/>
</dbReference>
<dbReference type="CDD" id="cd00207">
    <property type="entry name" value="fer2"/>
    <property type="match status" value="1"/>
</dbReference>
<dbReference type="Gene3D" id="3.10.20.30">
    <property type="match status" value="1"/>
</dbReference>
<dbReference type="InterPro" id="IPR036010">
    <property type="entry name" value="2Fe-2S_ferredoxin-like_sf"/>
</dbReference>
<dbReference type="InterPro" id="IPR001041">
    <property type="entry name" value="2Fe-2S_ferredoxin-type"/>
</dbReference>
<dbReference type="InterPro" id="IPR001055">
    <property type="entry name" value="Adrenodoxin-like"/>
</dbReference>
<dbReference type="InterPro" id="IPR012675">
    <property type="entry name" value="Beta-grasp_dom_sf"/>
</dbReference>
<dbReference type="PANTHER" id="PTHR23426:SF65">
    <property type="entry name" value="FERREDOXIN-2, MITOCHONDRIAL"/>
    <property type="match status" value="1"/>
</dbReference>
<dbReference type="PANTHER" id="PTHR23426">
    <property type="entry name" value="FERREDOXIN/ADRENODOXIN"/>
    <property type="match status" value="1"/>
</dbReference>
<dbReference type="Pfam" id="PF00111">
    <property type="entry name" value="Fer2"/>
    <property type="match status" value="1"/>
</dbReference>
<dbReference type="PRINTS" id="PR00355">
    <property type="entry name" value="ADRENODOXIN"/>
</dbReference>
<dbReference type="SUPFAM" id="SSF54292">
    <property type="entry name" value="2Fe-2S ferredoxin-like"/>
    <property type="match status" value="1"/>
</dbReference>
<dbReference type="PROSITE" id="PS51085">
    <property type="entry name" value="2FE2S_FER_2"/>
    <property type="match status" value="1"/>
</dbReference>
<comment type="function">
    <text evidence="3">Component of the chloroacetanilide N-alkylformylase multicomponent enzyme system involved in the degradation of chloroacetanilide herbicides (N-alkoxyalkyl-N-chloroacetyl-substituted aniline derivatives). In vitro, functions as an intermediate electron transfer protein.</text>
</comment>
<comment type="cofactor">
    <cofactor evidence="1">
        <name>[2Fe-2S] cluster</name>
        <dbReference type="ChEBI" id="CHEBI:190135"/>
    </cofactor>
    <text evidence="1">Binds 1 [2Fe-2S] cluster.</text>
</comment>
<comment type="subunit">
    <text evidence="3">The chloroacetanilide N-alkylformylase multicomponent enzyme system is composed of an oxygenase component (CndA) and an electron transfer component formed by a ferredoxin reductase (CndC1) and a ferredoxin (CndB1). In vitro, chloroacetanilide N-alkylformylase assays in which CndB1 is substituted for CndB2 demonstrate that the two enzymes possess nearly identical activities.</text>
</comment>
<comment type="similarity">
    <text evidence="5">Belongs to the adrenodoxin/putidaredoxin family.</text>
</comment>
<gene>
    <name evidence="4" type="primary">cndB2</name>
    <name evidence="7" type="ORF">HY78_13385</name>
</gene>